<dbReference type="EC" id="2.1.1.176"/>
<dbReference type="EMBL" id="AE015451">
    <property type="protein sequence ID" value="AAN65700.1"/>
    <property type="molecule type" value="Genomic_DNA"/>
</dbReference>
<dbReference type="RefSeq" id="NP_742236.1">
    <property type="nucleotide sequence ID" value="NC_002947.4"/>
</dbReference>
<dbReference type="RefSeq" id="WP_010951473.1">
    <property type="nucleotide sequence ID" value="NZ_CP169744.1"/>
</dbReference>
<dbReference type="SMR" id="Q88RR3"/>
<dbReference type="STRING" id="160488.PP_0066"/>
<dbReference type="PaxDb" id="160488-PP_0066"/>
<dbReference type="GeneID" id="83677310"/>
<dbReference type="KEGG" id="ppu:PP_0066"/>
<dbReference type="PATRIC" id="fig|160488.4.peg.71"/>
<dbReference type="eggNOG" id="COG0144">
    <property type="taxonomic scope" value="Bacteria"/>
</dbReference>
<dbReference type="HOGENOM" id="CLU_005316_0_4_6"/>
<dbReference type="OrthoDB" id="9810297at2"/>
<dbReference type="PhylomeDB" id="Q88RR3"/>
<dbReference type="BioCyc" id="PPUT160488:G1G01-69-MONOMER"/>
<dbReference type="Proteomes" id="UP000000556">
    <property type="component" value="Chromosome"/>
</dbReference>
<dbReference type="GO" id="GO:0005829">
    <property type="term" value="C:cytosol"/>
    <property type="evidence" value="ECO:0007669"/>
    <property type="project" value="TreeGrafter"/>
</dbReference>
<dbReference type="GO" id="GO:0003723">
    <property type="term" value="F:RNA binding"/>
    <property type="evidence" value="ECO:0007669"/>
    <property type="project" value="UniProtKB-KW"/>
</dbReference>
<dbReference type="GO" id="GO:0009383">
    <property type="term" value="F:rRNA (cytosine-C5-)-methyltransferase activity"/>
    <property type="evidence" value="ECO:0007669"/>
    <property type="project" value="TreeGrafter"/>
</dbReference>
<dbReference type="GO" id="GO:0006355">
    <property type="term" value="P:regulation of DNA-templated transcription"/>
    <property type="evidence" value="ECO:0007669"/>
    <property type="project" value="InterPro"/>
</dbReference>
<dbReference type="GO" id="GO:0070475">
    <property type="term" value="P:rRNA base methylation"/>
    <property type="evidence" value="ECO:0007669"/>
    <property type="project" value="TreeGrafter"/>
</dbReference>
<dbReference type="CDD" id="cd02440">
    <property type="entry name" value="AdoMet_MTases"/>
    <property type="match status" value="1"/>
</dbReference>
<dbReference type="FunFam" id="3.30.70.1170:FF:000002">
    <property type="entry name" value="Ribosomal RNA small subunit methyltransferase B"/>
    <property type="match status" value="1"/>
</dbReference>
<dbReference type="FunFam" id="3.40.50.150:FF:000022">
    <property type="entry name" value="Ribosomal RNA small subunit methyltransferase B"/>
    <property type="match status" value="1"/>
</dbReference>
<dbReference type="Gene3D" id="1.10.287.730">
    <property type="entry name" value="Helix hairpin bin"/>
    <property type="match status" value="1"/>
</dbReference>
<dbReference type="Gene3D" id="1.10.940.10">
    <property type="entry name" value="NusB-like"/>
    <property type="match status" value="1"/>
</dbReference>
<dbReference type="Gene3D" id="3.30.70.1170">
    <property type="entry name" value="Sun protein, domain 3"/>
    <property type="match status" value="1"/>
</dbReference>
<dbReference type="Gene3D" id="3.40.50.150">
    <property type="entry name" value="Vaccinia Virus protein VP39"/>
    <property type="match status" value="1"/>
</dbReference>
<dbReference type="InterPro" id="IPR049560">
    <property type="entry name" value="MeTrfase_RsmB-F_NOP2_cat"/>
</dbReference>
<dbReference type="InterPro" id="IPR001678">
    <property type="entry name" value="MeTrfase_RsmB-F_NOP2_dom"/>
</dbReference>
<dbReference type="InterPro" id="IPR035926">
    <property type="entry name" value="NusB-like_sf"/>
</dbReference>
<dbReference type="InterPro" id="IPR006027">
    <property type="entry name" value="NusB_RsmB_TIM44"/>
</dbReference>
<dbReference type="InterPro" id="IPR023267">
    <property type="entry name" value="RCMT"/>
</dbReference>
<dbReference type="InterPro" id="IPR004573">
    <property type="entry name" value="rRNA_ssu_MeTfrase_B"/>
</dbReference>
<dbReference type="InterPro" id="IPR054728">
    <property type="entry name" value="RsmB-like_ferredoxin"/>
</dbReference>
<dbReference type="InterPro" id="IPR018314">
    <property type="entry name" value="RsmB/NOL1/NOP2-like_CS"/>
</dbReference>
<dbReference type="InterPro" id="IPR029063">
    <property type="entry name" value="SAM-dependent_MTases_sf"/>
</dbReference>
<dbReference type="NCBIfam" id="NF008149">
    <property type="entry name" value="PRK10901.1"/>
    <property type="match status" value="1"/>
</dbReference>
<dbReference type="NCBIfam" id="TIGR00563">
    <property type="entry name" value="rsmB"/>
    <property type="match status" value="1"/>
</dbReference>
<dbReference type="PANTHER" id="PTHR22807:SF61">
    <property type="entry name" value="NOL1_NOP2_SUN FAMILY PROTEIN _ ANTITERMINATION NUSB DOMAIN-CONTAINING PROTEIN"/>
    <property type="match status" value="1"/>
</dbReference>
<dbReference type="PANTHER" id="PTHR22807">
    <property type="entry name" value="NOP2 YEAST -RELATED NOL1/NOP2/FMU SUN DOMAIN-CONTAINING"/>
    <property type="match status" value="1"/>
</dbReference>
<dbReference type="Pfam" id="PF01189">
    <property type="entry name" value="Methyltr_RsmB-F"/>
    <property type="match status" value="1"/>
</dbReference>
<dbReference type="Pfam" id="PF01029">
    <property type="entry name" value="NusB"/>
    <property type="match status" value="1"/>
</dbReference>
<dbReference type="Pfam" id="PF22458">
    <property type="entry name" value="RsmF-B_ferredox"/>
    <property type="match status" value="1"/>
</dbReference>
<dbReference type="PRINTS" id="PR02008">
    <property type="entry name" value="RCMTFAMILY"/>
</dbReference>
<dbReference type="SUPFAM" id="SSF48013">
    <property type="entry name" value="NusB-like"/>
    <property type="match status" value="1"/>
</dbReference>
<dbReference type="SUPFAM" id="SSF53335">
    <property type="entry name" value="S-adenosyl-L-methionine-dependent methyltransferases"/>
    <property type="match status" value="1"/>
</dbReference>
<dbReference type="PROSITE" id="PS01153">
    <property type="entry name" value="NOL1_NOP2_SUN"/>
    <property type="match status" value="1"/>
</dbReference>
<dbReference type="PROSITE" id="PS51686">
    <property type="entry name" value="SAM_MT_RSMB_NOP"/>
    <property type="match status" value="1"/>
</dbReference>
<proteinExistence type="inferred from homology"/>
<keyword id="KW-0963">Cytoplasm</keyword>
<keyword id="KW-0489">Methyltransferase</keyword>
<keyword id="KW-1185">Reference proteome</keyword>
<keyword id="KW-0690">Ribosome biogenesis</keyword>
<keyword id="KW-0694">RNA-binding</keyword>
<keyword id="KW-0698">rRNA processing</keyword>
<keyword id="KW-0949">S-adenosyl-L-methionine</keyword>
<keyword id="KW-0808">Transferase</keyword>
<evidence type="ECO:0000250" key="1"/>
<evidence type="ECO:0000255" key="2">
    <source>
        <dbReference type="PROSITE-ProRule" id="PRU01023"/>
    </source>
</evidence>
<evidence type="ECO:0000305" key="3"/>
<sequence length="436" mass="47451">MNPRLAAARALAAVLSGKASLNSSLPAQLDKVDERDRGLTQDLAFGTARWQPRLDLLAAQLLQKPFKAADADVQALLLVGLYQLFYTRIPAHAAIGETVGCADKLKKPWAKGLLNAVLRRAQREGEELLAGMERDPVVRTAHPRWLQKALKAFWPEQWEAICAANNAHPPMILRVNRRHHSRDAYLALLAEAGIGASACQYSRDGIVLAEACDVRGLPGFAEGWVSVQDEAAQLSADLLELAPGQRVLDACCAPGGKTCHLLEAEAGLANMVAIDLEAKRLTRVRENLDRLQLDAELIACDARDTASWWDGKPFQRILLDAPCSATGVIRRHPDIKMTRQADDIPALATLQGELLDALWPTLEVGGMLLYATCSTLPTENTEVIKAFLARTPGARELDLATEAGLRQPHGRQLLAQEGGHDGFYYAKLIKIAASRG</sequence>
<gene>
    <name type="primary">rsmB</name>
    <name type="synonym">rrmB</name>
    <name type="synonym">sun</name>
    <name type="ordered locus">PP_0066</name>
</gene>
<reference key="1">
    <citation type="journal article" date="2002" name="Environ. Microbiol.">
        <title>Complete genome sequence and comparative analysis of the metabolically versatile Pseudomonas putida KT2440.</title>
        <authorList>
            <person name="Nelson K.E."/>
            <person name="Weinel C."/>
            <person name="Paulsen I.T."/>
            <person name="Dodson R.J."/>
            <person name="Hilbert H."/>
            <person name="Martins dos Santos V.A.P."/>
            <person name="Fouts D.E."/>
            <person name="Gill S.R."/>
            <person name="Pop M."/>
            <person name="Holmes M."/>
            <person name="Brinkac L.M."/>
            <person name="Beanan M.J."/>
            <person name="DeBoy R.T."/>
            <person name="Daugherty S.C."/>
            <person name="Kolonay J.F."/>
            <person name="Madupu R."/>
            <person name="Nelson W.C."/>
            <person name="White O."/>
            <person name="Peterson J.D."/>
            <person name="Khouri H.M."/>
            <person name="Hance I."/>
            <person name="Chris Lee P."/>
            <person name="Holtzapple E.K."/>
            <person name="Scanlan D."/>
            <person name="Tran K."/>
            <person name="Moazzez A."/>
            <person name="Utterback T.R."/>
            <person name="Rizzo M."/>
            <person name="Lee K."/>
            <person name="Kosack D."/>
            <person name="Moestl D."/>
            <person name="Wedler H."/>
            <person name="Lauber J."/>
            <person name="Stjepandic D."/>
            <person name="Hoheisel J."/>
            <person name="Straetz M."/>
            <person name="Heim S."/>
            <person name="Kiewitz C."/>
            <person name="Eisen J.A."/>
            <person name="Timmis K.N."/>
            <person name="Duesterhoeft A."/>
            <person name="Tuemmler B."/>
            <person name="Fraser C.M."/>
        </authorList>
    </citation>
    <scope>NUCLEOTIDE SEQUENCE [LARGE SCALE GENOMIC DNA]</scope>
    <source>
        <strain>ATCC 47054 / DSM 6125 / CFBP 8728 / NCIMB 11950 / KT2440</strain>
    </source>
</reference>
<comment type="function">
    <text evidence="1">Specifically methylates the cytosine at position 967 (m5C967) of 16S rRNA.</text>
</comment>
<comment type="catalytic activity">
    <reaction>
        <text>cytidine(967) in 16S rRNA + S-adenosyl-L-methionine = 5-methylcytidine(967) in 16S rRNA + S-adenosyl-L-homocysteine + H(+)</text>
        <dbReference type="Rhea" id="RHEA:42748"/>
        <dbReference type="Rhea" id="RHEA-COMP:10219"/>
        <dbReference type="Rhea" id="RHEA-COMP:10220"/>
        <dbReference type="ChEBI" id="CHEBI:15378"/>
        <dbReference type="ChEBI" id="CHEBI:57856"/>
        <dbReference type="ChEBI" id="CHEBI:59789"/>
        <dbReference type="ChEBI" id="CHEBI:74483"/>
        <dbReference type="ChEBI" id="CHEBI:82748"/>
        <dbReference type="EC" id="2.1.1.176"/>
    </reaction>
</comment>
<comment type="subcellular location">
    <subcellularLocation>
        <location evidence="3">Cytoplasm</location>
    </subcellularLocation>
</comment>
<comment type="similarity">
    <text evidence="2">Belongs to the class I-like SAM-binding methyltransferase superfamily. RsmB/NOP family.</text>
</comment>
<protein>
    <recommendedName>
        <fullName>Ribosomal RNA small subunit methyltransferase B</fullName>
        <ecNumber>2.1.1.176</ecNumber>
    </recommendedName>
    <alternativeName>
        <fullName>16S rRNA m5C967 methyltransferase</fullName>
    </alternativeName>
    <alternativeName>
        <fullName>rRNA (cytosine-C(5)-)-methyltransferase RsmB</fullName>
    </alternativeName>
</protein>
<name>RSMB_PSEPK</name>
<organism>
    <name type="scientific">Pseudomonas putida (strain ATCC 47054 / DSM 6125 / CFBP 8728 / NCIMB 11950 / KT2440)</name>
    <dbReference type="NCBI Taxonomy" id="160488"/>
    <lineage>
        <taxon>Bacteria</taxon>
        <taxon>Pseudomonadati</taxon>
        <taxon>Pseudomonadota</taxon>
        <taxon>Gammaproteobacteria</taxon>
        <taxon>Pseudomonadales</taxon>
        <taxon>Pseudomonadaceae</taxon>
        <taxon>Pseudomonas</taxon>
    </lineage>
</organism>
<accession>Q88RR3</accession>
<feature type="chain" id="PRO_0000211800" description="Ribosomal RNA small subunit methyltransferase B">
    <location>
        <begin position="1"/>
        <end position="436"/>
    </location>
</feature>
<feature type="active site" description="Nucleophile" evidence="2">
    <location>
        <position position="373"/>
    </location>
</feature>
<feature type="binding site" evidence="2">
    <location>
        <begin position="251"/>
        <end position="257"/>
    </location>
    <ligand>
        <name>S-adenosyl-L-methionine</name>
        <dbReference type="ChEBI" id="CHEBI:59789"/>
    </ligand>
</feature>
<feature type="binding site" evidence="2">
    <location>
        <position position="275"/>
    </location>
    <ligand>
        <name>S-adenosyl-L-methionine</name>
        <dbReference type="ChEBI" id="CHEBI:59789"/>
    </ligand>
</feature>
<feature type="binding site" evidence="2">
    <location>
        <position position="301"/>
    </location>
    <ligand>
        <name>S-adenosyl-L-methionine</name>
        <dbReference type="ChEBI" id="CHEBI:59789"/>
    </ligand>
</feature>
<feature type="binding site" evidence="2">
    <location>
        <position position="320"/>
    </location>
    <ligand>
        <name>S-adenosyl-L-methionine</name>
        <dbReference type="ChEBI" id="CHEBI:59789"/>
    </ligand>
</feature>